<keyword id="KW-0227">DNA damage</keyword>
<keyword id="KW-0233">DNA recombination</keyword>
<keyword id="KW-0234">DNA repair</keyword>
<keyword id="KW-1185">Reference proteome</keyword>
<reference key="1">
    <citation type="submission" date="2006-05" db="EMBL/GenBank/DDBJ databases">
        <title>Complete sequence of chromosome of Silicibacter sp. TM1040.</title>
        <authorList>
            <consortium name="US DOE Joint Genome Institute"/>
            <person name="Copeland A."/>
            <person name="Lucas S."/>
            <person name="Lapidus A."/>
            <person name="Barry K."/>
            <person name="Detter J.C."/>
            <person name="Glavina del Rio T."/>
            <person name="Hammon N."/>
            <person name="Israni S."/>
            <person name="Dalin E."/>
            <person name="Tice H."/>
            <person name="Pitluck S."/>
            <person name="Brettin T."/>
            <person name="Bruce D."/>
            <person name="Han C."/>
            <person name="Tapia R."/>
            <person name="Goodwin L."/>
            <person name="Thompson L.S."/>
            <person name="Gilna P."/>
            <person name="Schmutz J."/>
            <person name="Larimer F."/>
            <person name="Land M."/>
            <person name="Hauser L."/>
            <person name="Kyrpides N."/>
            <person name="Kim E."/>
            <person name="Belas R."/>
            <person name="Moran M.A."/>
            <person name="Buchan A."/>
            <person name="Gonzalez J.M."/>
            <person name="Schell M.A."/>
            <person name="Sun F."/>
            <person name="Richardson P."/>
        </authorList>
    </citation>
    <scope>NUCLEOTIDE SEQUENCE [LARGE SCALE GENOMIC DNA]</scope>
    <source>
        <strain>TM1040</strain>
    </source>
</reference>
<proteinExistence type="inferred from homology"/>
<accession>Q1GDH8</accession>
<feature type="chain" id="PRO_0000264843" description="DNA repair protein RecO">
    <location>
        <begin position="1"/>
        <end position="241"/>
    </location>
</feature>
<comment type="function">
    <text evidence="1">Involved in DNA repair and RecF pathway recombination.</text>
</comment>
<comment type="similarity">
    <text evidence="1">Belongs to the RecO family.</text>
</comment>
<evidence type="ECO:0000255" key="1">
    <source>
        <dbReference type="HAMAP-Rule" id="MF_00201"/>
    </source>
</evidence>
<dbReference type="EMBL" id="CP000377">
    <property type="protein sequence ID" value="ABF65288.1"/>
    <property type="molecule type" value="Genomic_DNA"/>
</dbReference>
<dbReference type="RefSeq" id="WP_011539872.1">
    <property type="nucleotide sequence ID" value="NC_008044.1"/>
</dbReference>
<dbReference type="SMR" id="Q1GDH8"/>
<dbReference type="STRING" id="292414.TM1040_2556"/>
<dbReference type="KEGG" id="sit:TM1040_2556"/>
<dbReference type="eggNOG" id="COG1381">
    <property type="taxonomic scope" value="Bacteria"/>
</dbReference>
<dbReference type="HOGENOM" id="CLU_086029_0_0_5"/>
<dbReference type="OrthoDB" id="9804792at2"/>
<dbReference type="Proteomes" id="UP000000636">
    <property type="component" value="Chromosome"/>
</dbReference>
<dbReference type="GO" id="GO:0043590">
    <property type="term" value="C:bacterial nucleoid"/>
    <property type="evidence" value="ECO:0007669"/>
    <property type="project" value="TreeGrafter"/>
</dbReference>
<dbReference type="GO" id="GO:0006310">
    <property type="term" value="P:DNA recombination"/>
    <property type="evidence" value="ECO:0007669"/>
    <property type="project" value="UniProtKB-UniRule"/>
</dbReference>
<dbReference type="GO" id="GO:0006302">
    <property type="term" value="P:double-strand break repair"/>
    <property type="evidence" value="ECO:0007669"/>
    <property type="project" value="TreeGrafter"/>
</dbReference>
<dbReference type="Gene3D" id="2.40.50.140">
    <property type="entry name" value="Nucleic acid-binding proteins"/>
    <property type="match status" value="1"/>
</dbReference>
<dbReference type="Gene3D" id="1.20.1440.120">
    <property type="entry name" value="Recombination protein O, C-terminal domain"/>
    <property type="match status" value="1"/>
</dbReference>
<dbReference type="HAMAP" id="MF_00201">
    <property type="entry name" value="RecO"/>
    <property type="match status" value="1"/>
</dbReference>
<dbReference type="InterPro" id="IPR037278">
    <property type="entry name" value="ARFGAP/RecO"/>
</dbReference>
<dbReference type="InterPro" id="IPR022572">
    <property type="entry name" value="DNA_rep/recomb_RecO_N"/>
</dbReference>
<dbReference type="InterPro" id="IPR012340">
    <property type="entry name" value="NA-bd_OB-fold"/>
</dbReference>
<dbReference type="InterPro" id="IPR003717">
    <property type="entry name" value="RecO"/>
</dbReference>
<dbReference type="InterPro" id="IPR042242">
    <property type="entry name" value="RecO_C"/>
</dbReference>
<dbReference type="NCBIfam" id="TIGR00613">
    <property type="entry name" value="reco"/>
    <property type="match status" value="1"/>
</dbReference>
<dbReference type="PANTHER" id="PTHR33991">
    <property type="entry name" value="DNA REPAIR PROTEIN RECO"/>
    <property type="match status" value="1"/>
</dbReference>
<dbReference type="PANTHER" id="PTHR33991:SF1">
    <property type="entry name" value="DNA REPAIR PROTEIN RECO"/>
    <property type="match status" value="1"/>
</dbReference>
<dbReference type="Pfam" id="PF02565">
    <property type="entry name" value="RecO_C"/>
    <property type="match status" value="1"/>
</dbReference>
<dbReference type="Pfam" id="PF11967">
    <property type="entry name" value="RecO_N"/>
    <property type="match status" value="1"/>
</dbReference>
<dbReference type="SUPFAM" id="SSF57863">
    <property type="entry name" value="ArfGap/RecO-like zinc finger"/>
    <property type="match status" value="1"/>
</dbReference>
<dbReference type="SUPFAM" id="SSF50249">
    <property type="entry name" value="Nucleic acid-binding proteins"/>
    <property type="match status" value="1"/>
</dbReference>
<gene>
    <name evidence="1" type="primary">recO</name>
    <name type="ordered locus">TM1040_2556</name>
</gene>
<organism>
    <name type="scientific">Ruegeria sp. (strain TM1040)</name>
    <name type="common">Silicibacter sp.</name>
    <dbReference type="NCBI Taxonomy" id="292414"/>
    <lineage>
        <taxon>Bacteria</taxon>
        <taxon>Pseudomonadati</taxon>
        <taxon>Pseudomonadota</taxon>
        <taxon>Alphaproteobacteria</taxon>
        <taxon>Rhodobacterales</taxon>
        <taxon>Roseobacteraceae</taxon>
        <taxon>Ruegeria</taxon>
    </lineage>
</organism>
<protein>
    <recommendedName>
        <fullName evidence="1">DNA repair protein RecO</fullName>
    </recommendedName>
    <alternativeName>
        <fullName evidence="1">Recombination protein O</fullName>
    </alternativeName>
</protein>
<name>RECO_RUEST</name>
<sequence length="241" mass="26098">MDWRDQGILLTVRRHGESSALIEVFTEDHGLHAGLVRGGASRKMAPHLQPGAQLDLTWSARLEDHLGTYKAEPLRSRAGMALSGRLALAGLNAVCALLAFALPDRAPYPALYHRSSALLDLLDSEDLWPLAYLRWELSLLEDLGYGLDLSACAATGVTQDLRYVSPKTGRAVSGAAAGEWADRLLPLPPVMRGEGAAEDIEILTALRTTGFFLESKLAPALGNRPIPEARGRFLDALARRV</sequence>